<reference key="1">
    <citation type="journal article" date="1999" name="Nature">
        <title>Sequence and analysis of chromosome 4 of the plant Arabidopsis thaliana.</title>
        <authorList>
            <person name="Mayer K.F.X."/>
            <person name="Schueller C."/>
            <person name="Wambutt R."/>
            <person name="Murphy G."/>
            <person name="Volckaert G."/>
            <person name="Pohl T."/>
            <person name="Duesterhoeft A."/>
            <person name="Stiekema W."/>
            <person name="Entian K.-D."/>
            <person name="Terryn N."/>
            <person name="Harris B."/>
            <person name="Ansorge W."/>
            <person name="Brandt P."/>
            <person name="Grivell L.A."/>
            <person name="Rieger M."/>
            <person name="Weichselgartner M."/>
            <person name="de Simone V."/>
            <person name="Obermaier B."/>
            <person name="Mache R."/>
            <person name="Mueller M."/>
            <person name="Kreis M."/>
            <person name="Delseny M."/>
            <person name="Puigdomenech P."/>
            <person name="Watson M."/>
            <person name="Schmidtheini T."/>
            <person name="Reichert B."/>
            <person name="Portetelle D."/>
            <person name="Perez-Alonso M."/>
            <person name="Boutry M."/>
            <person name="Bancroft I."/>
            <person name="Vos P."/>
            <person name="Hoheisel J."/>
            <person name="Zimmermann W."/>
            <person name="Wedler H."/>
            <person name="Ridley P."/>
            <person name="Langham S.-A."/>
            <person name="McCullagh B."/>
            <person name="Bilham L."/>
            <person name="Robben J."/>
            <person name="van der Schueren J."/>
            <person name="Grymonprez B."/>
            <person name="Chuang Y.-J."/>
            <person name="Vandenbussche F."/>
            <person name="Braeken M."/>
            <person name="Weltjens I."/>
            <person name="Voet M."/>
            <person name="Bastiaens I."/>
            <person name="Aert R."/>
            <person name="Defoor E."/>
            <person name="Weitzenegger T."/>
            <person name="Bothe G."/>
            <person name="Ramsperger U."/>
            <person name="Hilbert H."/>
            <person name="Braun M."/>
            <person name="Holzer E."/>
            <person name="Brandt A."/>
            <person name="Peters S."/>
            <person name="van Staveren M."/>
            <person name="Dirkse W."/>
            <person name="Mooijman P."/>
            <person name="Klein Lankhorst R."/>
            <person name="Rose M."/>
            <person name="Hauf J."/>
            <person name="Koetter P."/>
            <person name="Berneiser S."/>
            <person name="Hempel S."/>
            <person name="Feldpausch M."/>
            <person name="Lamberth S."/>
            <person name="Van den Daele H."/>
            <person name="De Keyser A."/>
            <person name="Buysshaert C."/>
            <person name="Gielen J."/>
            <person name="Villarroel R."/>
            <person name="De Clercq R."/>
            <person name="van Montagu M."/>
            <person name="Rogers J."/>
            <person name="Cronin A."/>
            <person name="Quail M.A."/>
            <person name="Bray-Allen S."/>
            <person name="Clark L."/>
            <person name="Doggett J."/>
            <person name="Hall S."/>
            <person name="Kay M."/>
            <person name="Lennard N."/>
            <person name="McLay K."/>
            <person name="Mayes R."/>
            <person name="Pettett A."/>
            <person name="Rajandream M.A."/>
            <person name="Lyne M."/>
            <person name="Benes V."/>
            <person name="Rechmann S."/>
            <person name="Borkova D."/>
            <person name="Bloecker H."/>
            <person name="Scharfe M."/>
            <person name="Grimm M."/>
            <person name="Loehnert T.-H."/>
            <person name="Dose S."/>
            <person name="de Haan M."/>
            <person name="Maarse A.C."/>
            <person name="Schaefer M."/>
            <person name="Mueller-Auer S."/>
            <person name="Gabel C."/>
            <person name="Fuchs M."/>
            <person name="Fartmann B."/>
            <person name="Granderath K."/>
            <person name="Dauner D."/>
            <person name="Herzl A."/>
            <person name="Neumann S."/>
            <person name="Argiriou A."/>
            <person name="Vitale D."/>
            <person name="Liguori R."/>
            <person name="Piravandi E."/>
            <person name="Massenet O."/>
            <person name="Quigley F."/>
            <person name="Clabauld G."/>
            <person name="Muendlein A."/>
            <person name="Felber R."/>
            <person name="Schnabl S."/>
            <person name="Hiller R."/>
            <person name="Schmidt W."/>
            <person name="Lecharny A."/>
            <person name="Aubourg S."/>
            <person name="Chefdor F."/>
            <person name="Cooke R."/>
            <person name="Berger C."/>
            <person name="Monfort A."/>
            <person name="Casacuberta E."/>
            <person name="Gibbons T."/>
            <person name="Weber N."/>
            <person name="Vandenbol M."/>
            <person name="Bargues M."/>
            <person name="Terol J."/>
            <person name="Torres A."/>
            <person name="Perez-Perez A."/>
            <person name="Purnelle B."/>
            <person name="Bent E."/>
            <person name="Johnson S."/>
            <person name="Tacon D."/>
            <person name="Jesse T."/>
            <person name="Heijnen L."/>
            <person name="Schwarz S."/>
            <person name="Scholler P."/>
            <person name="Heber S."/>
            <person name="Francs P."/>
            <person name="Bielke C."/>
            <person name="Frishman D."/>
            <person name="Haase D."/>
            <person name="Lemcke K."/>
            <person name="Mewes H.-W."/>
            <person name="Stocker S."/>
            <person name="Zaccaria P."/>
            <person name="Bevan M."/>
            <person name="Wilson R.K."/>
            <person name="de la Bastide M."/>
            <person name="Habermann K."/>
            <person name="Parnell L."/>
            <person name="Dedhia N."/>
            <person name="Gnoj L."/>
            <person name="Schutz K."/>
            <person name="Huang E."/>
            <person name="Spiegel L."/>
            <person name="Sekhon M."/>
            <person name="Murray J."/>
            <person name="Sheet P."/>
            <person name="Cordes M."/>
            <person name="Abu-Threideh J."/>
            <person name="Stoneking T."/>
            <person name="Kalicki J."/>
            <person name="Graves T."/>
            <person name="Harmon G."/>
            <person name="Edwards J."/>
            <person name="Latreille P."/>
            <person name="Courtney L."/>
            <person name="Cloud J."/>
            <person name="Abbott A."/>
            <person name="Scott K."/>
            <person name="Johnson D."/>
            <person name="Minx P."/>
            <person name="Bentley D."/>
            <person name="Fulton B."/>
            <person name="Miller N."/>
            <person name="Greco T."/>
            <person name="Kemp K."/>
            <person name="Kramer J."/>
            <person name="Fulton L."/>
            <person name="Mardis E."/>
            <person name="Dante M."/>
            <person name="Pepin K."/>
            <person name="Hillier L.W."/>
            <person name="Nelson J."/>
            <person name="Spieth J."/>
            <person name="Ryan E."/>
            <person name="Andrews S."/>
            <person name="Geisel C."/>
            <person name="Layman D."/>
            <person name="Du H."/>
            <person name="Ali J."/>
            <person name="Berghoff A."/>
            <person name="Jones K."/>
            <person name="Drone K."/>
            <person name="Cotton M."/>
            <person name="Joshu C."/>
            <person name="Antonoiu B."/>
            <person name="Zidanic M."/>
            <person name="Strong C."/>
            <person name="Sun H."/>
            <person name="Lamar B."/>
            <person name="Yordan C."/>
            <person name="Ma P."/>
            <person name="Zhong J."/>
            <person name="Preston R."/>
            <person name="Vil D."/>
            <person name="Shekher M."/>
            <person name="Matero A."/>
            <person name="Shah R."/>
            <person name="Swaby I.K."/>
            <person name="O'Shaughnessy A."/>
            <person name="Rodriguez M."/>
            <person name="Hoffman J."/>
            <person name="Till S."/>
            <person name="Granat S."/>
            <person name="Shohdy N."/>
            <person name="Hasegawa A."/>
            <person name="Hameed A."/>
            <person name="Lodhi M."/>
            <person name="Johnson A."/>
            <person name="Chen E."/>
            <person name="Marra M.A."/>
            <person name="Martienssen R."/>
            <person name="McCombie W.R."/>
        </authorList>
    </citation>
    <scope>NUCLEOTIDE SEQUENCE [LARGE SCALE GENOMIC DNA]</scope>
    <source>
        <strain>cv. Columbia</strain>
    </source>
</reference>
<reference key="2">
    <citation type="journal article" date="2017" name="Plant J.">
        <title>Araport11: a complete reannotation of the Arabidopsis thaliana reference genome.</title>
        <authorList>
            <person name="Cheng C.Y."/>
            <person name="Krishnakumar V."/>
            <person name="Chan A.P."/>
            <person name="Thibaud-Nissen F."/>
            <person name="Schobel S."/>
            <person name="Town C.D."/>
        </authorList>
    </citation>
    <scope>GENOME REANNOTATION</scope>
    <source>
        <strain>cv. Columbia</strain>
    </source>
</reference>
<reference key="3">
    <citation type="journal article" date="2003" name="Science">
        <title>Empirical analysis of transcriptional activity in the Arabidopsis genome.</title>
        <authorList>
            <person name="Yamada K."/>
            <person name="Lim J."/>
            <person name="Dale J.M."/>
            <person name="Chen H."/>
            <person name="Shinn P."/>
            <person name="Palm C.J."/>
            <person name="Southwick A.M."/>
            <person name="Wu H.C."/>
            <person name="Kim C.J."/>
            <person name="Nguyen M."/>
            <person name="Pham P.K."/>
            <person name="Cheuk R.F."/>
            <person name="Karlin-Newmann G."/>
            <person name="Liu S.X."/>
            <person name="Lam B."/>
            <person name="Sakano H."/>
            <person name="Wu T."/>
            <person name="Yu G."/>
            <person name="Miranda M."/>
            <person name="Quach H.L."/>
            <person name="Tripp M."/>
            <person name="Chang C.H."/>
            <person name="Lee J.M."/>
            <person name="Toriumi M.J."/>
            <person name="Chan M.M."/>
            <person name="Tang C.C."/>
            <person name="Onodera C.S."/>
            <person name="Deng J.M."/>
            <person name="Akiyama K."/>
            <person name="Ansari Y."/>
            <person name="Arakawa T."/>
            <person name="Banh J."/>
            <person name="Banno F."/>
            <person name="Bowser L."/>
            <person name="Brooks S.Y."/>
            <person name="Carninci P."/>
            <person name="Chao Q."/>
            <person name="Choy N."/>
            <person name="Enju A."/>
            <person name="Goldsmith A.D."/>
            <person name="Gurjal M."/>
            <person name="Hansen N.F."/>
            <person name="Hayashizaki Y."/>
            <person name="Johnson-Hopson C."/>
            <person name="Hsuan V.W."/>
            <person name="Iida K."/>
            <person name="Karnes M."/>
            <person name="Khan S."/>
            <person name="Koesema E."/>
            <person name="Ishida J."/>
            <person name="Jiang P.X."/>
            <person name="Jones T."/>
            <person name="Kawai J."/>
            <person name="Kamiya A."/>
            <person name="Meyers C."/>
            <person name="Nakajima M."/>
            <person name="Narusaka M."/>
            <person name="Seki M."/>
            <person name="Sakurai T."/>
            <person name="Satou M."/>
            <person name="Tamse R."/>
            <person name="Vaysberg M."/>
            <person name="Wallender E.K."/>
            <person name="Wong C."/>
            <person name="Yamamura Y."/>
            <person name="Yuan S."/>
            <person name="Shinozaki K."/>
            <person name="Davis R.W."/>
            <person name="Theologis A."/>
            <person name="Ecker J.R."/>
        </authorList>
    </citation>
    <scope>NUCLEOTIDE SEQUENCE [LARGE SCALE MRNA]</scope>
    <source>
        <strain>cv. Columbia</strain>
    </source>
</reference>
<reference key="4">
    <citation type="journal article" date="2002" name="Science">
        <title>Functional annotation of a full-length Arabidopsis cDNA collection.</title>
        <authorList>
            <person name="Seki M."/>
            <person name="Narusaka M."/>
            <person name="Kamiya A."/>
            <person name="Ishida J."/>
            <person name="Satou M."/>
            <person name="Sakurai T."/>
            <person name="Nakajima M."/>
            <person name="Enju A."/>
            <person name="Akiyama K."/>
            <person name="Oono Y."/>
            <person name="Muramatsu M."/>
            <person name="Hayashizaki Y."/>
            <person name="Kawai J."/>
            <person name="Carninci P."/>
            <person name="Itoh M."/>
            <person name="Ishii Y."/>
            <person name="Arakawa T."/>
            <person name="Shibata K."/>
            <person name="Shinagawa A."/>
            <person name="Shinozaki K."/>
        </authorList>
    </citation>
    <scope>NUCLEOTIDE SEQUENCE [LARGE SCALE MRNA]</scope>
    <source>
        <strain>cv. Columbia</strain>
    </source>
</reference>
<reference key="5">
    <citation type="submission" date="2002-03" db="EMBL/GenBank/DDBJ databases">
        <title>Full-length cDNA from Arabidopsis thaliana.</title>
        <authorList>
            <person name="Brover V.V."/>
            <person name="Troukhan M.E."/>
            <person name="Alexandrov N.A."/>
            <person name="Lu Y.-P."/>
            <person name="Flavell R.B."/>
            <person name="Feldmann K.A."/>
        </authorList>
    </citation>
    <scope>NUCLEOTIDE SEQUENCE [LARGE SCALE MRNA]</scope>
</reference>
<reference key="6">
    <citation type="journal article" date="2003" name="Plant J.">
        <title>Protein interaction analysis of SCF ubiquitin E3 ligase subunits from Arabidopsis.</title>
        <authorList>
            <person name="Risseeuw E.P."/>
            <person name="Daskalchuk T.E."/>
            <person name="Banks T.W."/>
            <person name="Liu E."/>
            <person name="Cotelesage J."/>
            <person name="Hellmann H."/>
            <person name="Estelle M."/>
            <person name="Somers D.E."/>
            <person name="Crosby W.L."/>
        </authorList>
    </citation>
    <scope>INTERACTION WITH SKP1A/ASK1</scope>
</reference>
<sequence>MPSTPLANGGTPPMGGGERTTVTTSTVADDKPGVSMMEQLVPEITTHALSYLDYPSLCRLSMTNSLMRKAANDDNAWKALYHKDFTLEQDGITPVNGWKEYYATTRAIISVNTEFFTIIRDRALQAMARLWLNSDYVKCIHASGELFSGYNEVIQSWQLCFNWEQGFDFQVHTVRTRILTDMAWVTMKAYLNVDGGPFLITNVFEFHNGRWHMVHHHSSVMLIDDQQVVVH</sequence>
<protein>
    <recommendedName>
        <fullName>F-box protein SKIP8</fullName>
    </recommendedName>
    <alternativeName>
        <fullName>SKP1-interacting partner 8</fullName>
    </alternativeName>
</protein>
<comment type="function">
    <text evidence="1">Component of SCF(ASK-cullin-F-box) E3 ubiquitin ligase complexes, which may mediate the ubiquitination and subsequent proteasomal degradation of target proteins.</text>
</comment>
<comment type="pathway">
    <text>Protein modification; protein ubiquitination.</text>
</comment>
<comment type="subunit">
    <text evidence="1 3">Part of a SCF (ASK-cullin-F-box) protein ligase complex (By similarity). Interacts with SKP1A/ASK1.</text>
</comment>
<comment type="domain">
    <text evidence="1">The F-box is necessary for the interaction with ASK proteins.</text>
</comment>
<comment type="sequence caution" evidence="4">
    <conflict type="erroneous gene model prediction">
        <sequence resource="EMBL-CDS" id="AAC33952"/>
    </conflict>
    <text>The predicted gene At4g10930 has been split into 2 genes: At4g10925 and At4g10930.</text>
</comment>
<comment type="sequence caution" evidence="4">
    <conflict type="erroneous gene model prediction">
        <sequence resource="EMBL-CDS" id="CAB40061"/>
    </conflict>
    <text>The predicted gene At4g10930 has been split into 2 genes: At4g10925 and At4g10930.</text>
</comment>
<comment type="sequence caution" evidence="4">
    <conflict type="erroneous gene model prediction">
        <sequence resource="EMBL-CDS" id="CAB81194"/>
    </conflict>
    <text>The predicted gene At4g10930 has been split into 2 genes: At4g10925 and At4g10930.</text>
</comment>
<organism>
    <name type="scientific">Arabidopsis thaliana</name>
    <name type="common">Mouse-ear cress</name>
    <dbReference type="NCBI Taxonomy" id="3702"/>
    <lineage>
        <taxon>Eukaryota</taxon>
        <taxon>Viridiplantae</taxon>
        <taxon>Streptophyta</taxon>
        <taxon>Embryophyta</taxon>
        <taxon>Tracheophyta</taxon>
        <taxon>Spermatophyta</taxon>
        <taxon>Magnoliopsida</taxon>
        <taxon>eudicotyledons</taxon>
        <taxon>Gunneridae</taxon>
        <taxon>Pentapetalae</taxon>
        <taxon>rosids</taxon>
        <taxon>malvids</taxon>
        <taxon>Brassicales</taxon>
        <taxon>Brassicaceae</taxon>
        <taxon>Camelineae</taxon>
        <taxon>Arabidopsis</taxon>
    </lineage>
</organism>
<proteinExistence type="evidence at protein level"/>
<feature type="chain" id="PRO_0000375236" description="F-box protein SKIP8">
    <location>
        <begin position="1"/>
        <end position="231"/>
    </location>
</feature>
<feature type="domain" description="F-box">
    <location>
        <begin position="34"/>
        <end position="80"/>
    </location>
</feature>
<feature type="region of interest" description="Disordered" evidence="2">
    <location>
        <begin position="1"/>
        <end position="24"/>
    </location>
</feature>
<gene>
    <name type="primary">SKIP8</name>
    <name type="ordered locus">At4g10925</name>
    <name type="ORF">F25I24.140</name>
    <name type="ORF">F8M12.7</name>
</gene>
<dbReference type="EMBL" id="AF080118">
    <property type="protein sequence ID" value="AAC33952.1"/>
    <property type="status" value="ALT_SEQ"/>
    <property type="molecule type" value="Genomic_DNA"/>
</dbReference>
<dbReference type="EMBL" id="AL049525">
    <property type="protein sequence ID" value="CAB40061.1"/>
    <property type="status" value="ALT_SEQ"/>
    <property type="molecule type" value="Genomic_DNA"/>
</dbReference>
<dbReference type="EMBL" id="AL161518">
    <property type="protein sequence ID" value="CAB81194.1"/>
    <property type="status" value="ALT_SEQ"/>
    <property type="molecule type" value="Genomic_DNA"/>
</dbReference>
<dbReference type="EMBL" id="CP002687">
    <property type="protein sequence ID" value="AEE82945.1"/>
    <property type="molecule type" value="Genomic_DNA"/>
</dbReference>
<dbReference type="EMBL" id="CP002687">
    <property type="protein sequence ID" value="AEE82946.1"/>
    <property type="molecule type" value="Genomic_DNA"/>
</dbReference>
<dbReference type="EMBL" id="CP002687">
    <property type="protein sequence ID" value="AEE82947.1"/>
    <property type="molecule type" value="Genomic_DNA"/>
</dbReference>
<dbReference type="EMBL" id="CP002687">
    <property type="protein sequence ID" value="ANM66566.1"/>
    <property type="molecule type" value="Genomic_DNA"/>
</dbReference>
<dbReference type="EMBL" id="CP002687">
    <property type="protein sequence ID" value="ANM66567.1"/>
    <property type="molecule type" value="Genomic_DNA"/>
</dbReference>
<dbReference type="EMBL" id="AY059743">
    <property type="protein sequence ID" value="AAL24155.1"/>
    <property type="molecule type" value="mRNA"/>
</dbReference>
<dbReference type="EMBL" id="AY096714">
    <property type="protein sequence ID" value="AAM20348.1"/>
    <property type="molecule type" value="mRNA"/>
</dbReference>
<dbReference type="EMBL" id="AK117762">
    <property type="protein sequence ID" value="BAC42410.1"/>
    <property type="molecule type" value="mRNA"/>
</dbReference>
<dbReference type="EMBL" id="AY084656">
    <property type="protein sequence ID" value="AAM61219.1"/>
    <property type="molecule type" value="mRNA"/>
</dbReference>
<dbReference type="PIR" id="T01884">
    <property type="entry name" value="T01884"/>
</dbReference>
<dbReference type="RefSeq" id="NP_001190698.1">
    <property type="nucleotide sequence ID" value="NM_001203769.2"/>
</dbReference>
<dbReference type="RefSeq" id="NP_001328452.1">
    <property type="nucleotide sequence ID" value="NM_001340692.1"/>
</dbReference>
<dbReference type="RefSeq" id="NP_001328453.1">
    <property type="nucleotide sequence ID" value="NM_001340693.1"/>
</dbReference>
<dbReference type="RefSeq" id="NP_567369.1">
    <property type="nucleotide sequence ID" value="NM_117161.4"/>
</dbReference>
<dbReference type="RefSeq" id="NP_849357.1">
    <property type="nucleotide sequence ID" value="NM_179026.3"/>
</dbReference>
<dbReference type="SMR" id="Q93YV9"/>
<dbReference type="BioGRID" id="11990">
    <property type="interactions" value="1"/>
</dbReference>
<dbReference type="FunCoup" id="Q93YV9">
    <property type="interactions" value="579"/>
</dbReference>
<dbReference type="STRING" id="3702.Q93YV9"/>
<dbReference type="GlyGen" id="Q93YV9">
    <property type="glycosylation" value="1 site"/>
</dbReference>
<dbReference type="PaxDb" id="3702-AT4G10925.3"/>
<dbReference type="ProteomicsDB" id="234587"/>
<dbReference type="DNASU" id="826691"/>
<dbReference type="EnsemblPlants" id="AT4G10925.1">
    <property type="protein sequence ID" value="AT4G10925.1"/>
    <property type="gene ID" value="AT4G10925"/>
</dbReference>
<dbReference type="EnsemblPlants" id="AT4G10925.2">
    <property type="protein sequence ID" value="AT4G10925.2"/>
    <property type="gene ID" value="AT4G10925"/>
</dbReference>
<dbReference type="EnsemblPlants" id="AT4G10925.3">
    <property type="protein sequence ID" value="AT4G10925.3"/>
    <property type="gene ID" value="AT4G10925"/>
</dbReference>
<dbReference type="EnsemblPlants" id="AT4G10925.4">
    <property type="protein sequence ID" value="AT4G10925.4"/>
    <property type="gene ID" value="AT4G10925"/>
</dbReference>
<dbReference type="EnsemblPlants" id="AT4G10925.5">
    <property type="protein sequence ID" value="AT4G10925.5"/>
    <property type="gene ID" value="AT4G10925"/>
</dbReference>
<dbReference type="GeneID" id="826691"/>
<dbReference type="Gramene" id="AT4G10925.1">
    <property type="protein sequence ID" value="AT4G10925.1"/>
    <property type="gene ID" value="AT4G10925"/>
</dbReference>
<dbReference type="Gramene" id="AT4G10925.2">
    <property type="protein sequence ID" value="AT4G10925.2"/>
    <property type="gene ID" value="AT4G10925"/>
</dbReference>
<dbReference type="Gramene" id="AT4G10925.3">
    <property type="protein sequence ID" value="AT4G10925.3"/>
    <property type="gene ID" value="AT4G10925"/>
</dbReference>
<dbReference type="Gramene" id="AT4G10925.4">
    <property type="protein sequence ID" value="AT4G10925.4"/>
    <property type="gene ID" value="AT4G10925"/>
</dbReference>
<dbReference type="Gramene" id="AT4G10925.5">
    <property type="protein sequence ID" value="AT4G10925.5"/>
    <property type="gene ID" value="AT4G10925"/>
</dbReference>
<dbReference type="KEGG" id="ath:AT4G10925"/>
<dbReference type="Araport" id="AT4G10925"/>
<dbReference type="TAIR" id="AT4G10925"/>
<dbReference type="eggNOG" id="ENOG502QT1W">
    <property type="taxonomic scope" value="Eukaryota"/>
</dbReference>
<dbReference type="HOGENOM" id="CLU_084893_0_1_1"/>
<dbReference type="InParanoid" id="Q93YV9"/>
<dbReference type="OMA" id="MQSWQLA"/>
<dbReference type="OrthoDB" id="1901658at2759"/>
<dbReference type="PhylomeDB" id="Q93YV9"/>
<dbReference type="UniPathway" id="UPA00143"/>
<dbReference type="PRO" id="PR:Q93YV9"/>
<dbReference type="Proteomes" id="UP000006548">
    <property type="component" value="Chromosome 4"/>
</dbReference>
<dbReference type="ExpressionAtlas" id="Q93YV9">
    <property type="expression patterns" value="baseline and differential"/>
</dbReference>
<dbReference type="GO" id="GO:0016567">
    <property type="term" value="P:protein ubiquitination"/>
    <property type="evidence" value="ECO:0007669"/>
    <property type="project" value="UniProtKB-UniPathway"/>
</dbReference>
<dbReference type="CDD" id="cd22117">
    <property type="entry name" value="F-box_FBXL4"/>
    <property type="match status" value="1"/>
</dbReference>
<dbReference type="Gene3D" id="1.20.1280.50">
    <property type="match status" value="1"/>
</dbReference>
<dbReference type="Gene3D" id="3.10.450.50">
    <property type="match status" value="1"/>
</dbReference>
<dbReference type="InterPro" id="IPR036047">
    <property type="entry name" value="F-box-like_dom_sf"/>
</dbReference>
<dbReference type="InterPro" id="IPR001810">
    <property type="entry name" value="F-box_dom"/>
</dbReference>
<dbReference type="InterPro" id="IPR032710">
    <property type="entry name" value="NTF2-like_dom_sf"/>
</dbReference>
<dbReference type="InterPro" id="IPR044260">
    <property type="entry name" value="SKIP8-like"/>
</dbReference>
<dbReference type="InterPro" id="IPR037401">
    <property type="entry name" value="SnoaL-like"/>
</dbReference>
<dbReference type="PANTHER" id="PTHR47124">
    <property type="entry name" value="F-BOX PROTEIN SKIP8"/>
    <property type="match status" value="1"/>
</dbReference>
<dbReference type="PANTHER" id="PTHR47124:SF1">
    <property type="entry name" value="F-BOX PROTEIN SKIP8"/>
    <property type="match status" value="1"/>
</dbReference>
<dbReference type="Pfam" id="PF12937">
    <property type="entry name" value="F-box-like"/>
    <property type="match status" value="1"/>
</dbReference>
<dbReference type="Pfam" id="PF13474">
    <property type="entry name" value="SnoaL_3"/>
    <property type="match status" value="1"/>
</dbReference>
<dbReference type="SUPFAM" id="SSF81383">
    <property type="entry name" value="F-box domain"/>
    <property type="match status" value="1"/>
</dbReference>
<dbReference type="SUPFAM" id="SSF54427">
    <property type="entry name" value="NTF2-like"/>
    <property type="match status" value="1"/>
</dbReference>
<accession>Q93YV9</accession>
<accession>O81622</accession>
<keyword id="KW-1185">Reference proteome</keyword>
<keyword id="KW-0833">Ubl conjugation pathway</keyword>
<evidence type="ECO:0000250" key="1"/>
<evidence type="ECO:0000256" key="2">
    <source>
        <dbReference type="SAM" id="MobiDB-lite"/>
    </source>
</evidence>
<evidence type="ECO:0000269" key="3">
    <source>
    </source>
</evidence>
<evidence type="ECO:0000305" key="4"/>
<name>SKIP8_ARATH</name>